<keyword id="KW-0963">Cytoplasm</keyword>
<keyword id="KW-0312">Gluconeogenesis</keyword>
<keyword id="KW-0324">Glycolysis</keyword>
<keyword id="KW-0413">Isomerase</keyword>
<keyword id="KW-1185">Reference proteome</keyword>
<feature type="chain" id="PRO_0000307486" description="Triosephosphate isomerase">
    <location>
        <begin position="1"/>
        <end position="251"/>
    </location>
</feature>
<feature type="active site" description="Electrophile" evidence="1">
    <location>
        <position position="95"/>
    </location>
</feature>
<feature type="active site" description="Proton acceptor" evidence="1">
    <location>
        <position position="167"/>
    </location>
</feature>
<feature type="binding site" evidence="1">
    <location>
        <begin position="9"/>
        <end position="11"/>
    </location>
    <ligand>
        <name>substrate</name>
    </ligand>
</feature>
<feature type="binding site" evidence="1">
    <location>
        <position position="173"/>
    </location>
    <ligand>
        <name>substrate</name>
    </ligand>
</feature>
<feature type="binding site" evidence="1">
    <location>
        <position position="213"/>
    </location>
    <ligand>
        <name>substrate</name>
    </ligand>
</feature>
<feature type="binding site" evidence="1">
    <location>
        <begin position="234"/>
        <end position="235"/>
    </location>
    <ligand>
        <name>substrate</name>
    </ligand>
</feature>
<proteinExistence type="inferred from homology"/>
<comment type="function">
    <text evidence="1">Involved in the gluconeogenesis. Catalyzes stereospecifically the conversion of dihydroxyacetone phosphate (DHAP) to D-glyceraldehyde-3-phosphate (G3P).</text>
</comment>
<comment type="catalytic activity">
    <reaction evidence="1">
        <text>D-glyceraldehyde 3-phosphate = dihydroxyacetone phosphate</text>
        <dbReference type="Rhea" id="RHEA:18585"/>
        <dbReference type="ChEBI" id="CHEBI:57642"/>
        <dbReference type="ChEBI" id="CHEBI:59776"/>
        <dbReference type="EC" id="5.3.1.1"/>
    </reaction>
</comment>
<comment type="pathway">
    <text evidence="1">Carbohydrate biosynthesis; gluconeogenesis.</text>
</comment>
<comment type="pathway">
    <text evidence="1">Carbohydrate degradation; glycolysis; D-glyceraldehyde 3-phosphate from glycerone phosphate: step 1/1.</text>
</comment>
<comment type="subunit">
    <text evidence="1">Homodimer.</text>
</comment>
<comment type="subcellular location">
    <subcellularLocation>
        <location evidence="1">Cytoplasm</location>
    </subcellularLocation>
</comment>
<comment type="similarity">
    <text evidence="1">Belongs to the triosephosphate isomerase family.</text>
</comment>
<evidence type="ECO:0000255" key="1">
    <source>
        <dbReference type="HAMAP-Rule" id="MF_00147"/>
    </source>
</evidence>
<gene>
    <name evidence="1" type="primary">tpiA</name>
    <name type="ordered locus">LCA_0606</name>
</gene>
<name>TPIS_LATSS</name>
<dbReference type="EC" id="5.3.1.1" evidence="1"/>
<dbReference type="EMBL" id="CR936503">
    <property type="protein sequence ID" value="CAI54910.1"/>
    <property type="molecule type" value="Genomic_DNA"/>
</dbReference>
<dbReference type="RefSeq" id="WP_011374315.1">
    <property type="nucleotide sequence ID" value="NC_007576.1"/>
</dbReference>
<dbReference type="SMR" id="Q38Y19"/>
<dbReference type="STRING" id="314315.LCA_0606"/>
<dbReference type="GeneID" id="57133463"/>
<dbReference type="KEGG" id="lsa:LCA_0606"/>
<dbReference type="eggNOG" id="COG0149">
    <property type="taxonomic scope" value="Bacteria"/>
</dbReference>
<dbReference type="HOGENOM" id="CLU_024251_2_3_9"/>
<dbReference type="OrthoDB" id="9809429at2"/>
<dbReference type="UniPathway" id="UPA00109">
    <property type="reaction ID" value="UER00189"/>
</dbReference>
<dbReference type="UniPathway" id="UPA00138"/>
<dbReference type="Proteomes" id="UP000002707">
    <property type="component" value="Chromosome"/>
</dbReference>
<dbReference type="GO" id="GO:0005829">
    <property type="term" value="C:cytosol"/>
    <property type="evidence" value="ECO:0007669"/>
    <property type="project" value="TreeGrafter"/>
</dbReference>
<dbReference type="GO" id="GO:0004807">
    <property type="term" value="F:triose-phosphate isomerase activity"/>
    <property type="evidence" value="ECO:0007669"/>
    <property type="project" value="UniProtKB-UniRule"/>
</dbReference>
<dbReference type="GO" id="GO:0006094">
    <property type="term" value="P:gluconeogenesis"/>
    <property type="evidence" value="ECO:0007669"/>
    <property type="project" value="UniProtKB-UniRule"/>
</dbReference>
<dbReference type="GO" id="GO:0046166">
    <property type="term" value="P:glyceraldehyde-3-phosphate biosynthetic process"/>
    <property type="evidence" value="ECO:0007669"/>
    <property type="project" value="TreeGrafter"/>
</dbReference>
<dbReference type="GO" id="GO:0019563">
    <property type="term" value="P:glycerol catabolic process"/>
    <property type="evidence" value="ECO:0007669"/>
    <property type="project" value="TreeGrafter"/>
</dbReference>
<dbReference type="GO" id="GO:0006096">
    <property type="term" value="P:glycolytic process"/>
    <property type="evidence" value="ECO:0007669"/>
    <property type="project" value="UniProtKB-UniRule"/>
</dbReference>
<dbReference type="CDD" id="cd00311">
    <property type="entry name" value="TIM"/>
    <property type="match status" value="1"/>
</dbReference>
<dbReference type="FunFam" id="3.20.20.70:FF:000016">
    <property type="entry name" value="Triosephosphate isomerase"/>
    <property type="match status" value="1"/>
</dbReference>
<dbReference type="Gene3D" id="3.20.20.70">
    <property type="entry name" value="Aldolase class I"/>
    <property type="match status" value="1"/>
</dbReference>
<dbReference type="HAMAP" id="MF_00147_B">
    <property type="entry name" value="TIM_B"/>
    <property type="match status" value="1"/>
</dbReference>
<dbReference type="InterPro" id="IPR013785">
    <property type="entry name" value="Aldolase_TIM"/>
</dbReference>
<dbReference type="InterPro" id="IPR035990">
    <property type="entry name" value="TIM_sf"/>
</dbReference>
<dbReference type="InterPro" id="IPR022896">
    <property type="entry name" value="TrioseP_Isoase_bac/euk"/>
</dbReference>
<dbReference type="InterPro" id="IPR000652">
    <property type="entry name" value="Triosephosphate_isomerase"/>
</dbReference>
<dbReference type="InterPro" id="IPR020861">
    <property type="entry name" value="Triosephosphate_isomerase_AS"/>
</dbReference>
<dbReference type="NCBIfam" id="TIGR00419">
    <property type="entry name" value="tim"/>
    <property type="match status" value="1"/>
</dbReference>
<dbReference type="PANTHER" id="PTHR21139">
    <property type="entry name" value="TRIOSEPHOSPHATE ISOMERASE"/>
    <property type="match status" value="1"/>
</dbReference>
<dbReference type="PANTHER" id="PTHR21139:SF42">
    <property type="entry name" value="TRIOSEPHOSPHATE ISOMERASE"/>
    <property type="match status" value="1"/>
</dbReference>
<dbReference type="Pfam" id="PF00121">
    <property type="entry name" value="TIM"/>
    <property type="match status" value="1"/>
</dbReference>
<dbReference type="SUPFAM" id="SSF51351">
    <property type="entry name" value="Triosephosphate isomerase (TIM)"/>
    <property type="match status" value="1"/>
</dbReference>
<dbReference type="PROSITE" id="PS00171">
    <property type="entry name" value="TIM_1"/>
    <property type="match status" value="1"/>
</dbReference>
<dbReference type="PROSITE" id="PS51440">
    <property type="entry name" value="TIM_2"/>
    <property type="match status" value="1"/>
</dbReference>
<sequence>MRKPIIAGNWKMNMNPTQTTEFVNAIKANLPKFDQTESVIGAPAVDLPALLEAAKGTDLKVAAENCYFEEAGAFTGETSPKTLNEMGVDYVIIGHSERRDYFHETDEDINKKAHAIFKNNMTPIFCCGESLETREAGKAEEWVSNQVTEGLKGLSADQVSSMVIAYEPIWAIGTGKTASADQAQEICAVVRQTVAKLYDQTVADKVRIQYGGSVKPANVKEIMGKEDIDGGLVGGASMEPASFLDLVHFND</sequence>
<reference key="1">
    <citation type="journal article" date="2005" name="Nat. Biotechnol.">
        <title>The complete genome sequence of the meat-borne lactic acid bacterium Lactobacillus sakei 23K.</title>
        <authorList>
            <person name="Chaillou S."/>
            <person name="Champomier-Verges M.-C."/>
            <person name="Cornet M."/>
            <person name="Crutz-Le Coq A.-M."/>
            <person name="Dudez A.-M."/>
            <person name="Martin V."/>
            <person name="Beaufils S."/>
            <person name="Darbon-Rongere E."/>
            <person name="Bossy R."/>
            <person name="Loux V."/>
            <person name="Zagorec M."/>
        </authorList>
    </citation>
    <scope>NUCLEOTIDE SEQUENCE [LARGE SCALE GENOMIC DNA]</scope>
    <source>
        <strain>23K</strain>
    </source>
</reference>
<organism>
    <name type="scientific">Latilactobacillus sakei subsp. sakei (strain 23K)</name>
    <name type="common">Lactobacillus sakei subsp. sakei</name>
    <dbReference type="NCBI Taxonomy" id="314315"/>
    <lineage>
        <taxon>Bacteria</taxon>
        <taxon>Bacillati</taxon>
        <taxon>Bacillota</taxon>
        <taxon>Bacilli</taxon>
        <taxon>Lactobacillales</taxon>
        <taxon>Lactobacillaceae</taxon>
        <taxon>Latilactobacillus</taxon>
    </lineage>
</organism>
<accession>Q38Y19</accession>
<protein>
    <recommendedName>
        <fullName evidence="1">Triosephosphate isomerase</fullName>
        <shortName evidence="1">TIM</shortName>
        <shortName evidence="1">TPI</shortName>
        <ecNumber evidence="1">5.3.1.1</ecNumber>
    </recommendedName>
    <alternativeName>
        <fullName evidence="1">Triose-phosphate isomerase</fullName>
    </alternativeName>
</protein>